<accession>Q2YBH2</accession>
<dbReference type="EC" id="3.1.1.29" evidence="1"/>
<dbReference type="EMBL" id="CP000103">
    <property type="protein sequence ID" value="ABB73899.1"/>
    <property type="molecule type" value="Genomic_DNA"/>
</dbReference>
<dbReference type="RefSeq" id="WP_011379953.1">
    <property type="nucleotide sequence ID" value="NC_007614.1"/>
</dbReference>
<dbReference type="SMR" id="Q2YBH2"/>
<dbReference type="STRING" id="323848.Nmul_A0591"/>
<dbReference type="KEGG" id="nmu:Nmul_A0591"/>
<dbReference type="eggNOG" id="COG0193">
    <property type="taxonomic scope" value="Bacteria"/>
</dbReference>
<dbReference type="HOGENOM" id="CLU_062456_3_1_4"/>
<dbReference type="OrthoDB" id="9800507at2"/>
<dbReference type="Proteomes" id="UP000002718">
    <property type="component" value="Chromosome"/>
</dbReference>
<dbReference type="GO" id="GO:0005737">
    <property type="term" value="C:cytoplasm"/>
    <property type="evidence" value="ECO:0007669"/>
    <property type="project" value="UniProtKB-SubCell"/>
</dbReference>
<dbReference type="GO" id="GO:0004045">
    <property type="term" value="F:peptidyl-tRNA hydrolase activity"/>
    <property type="evidence" value="ECO:0007669"/>
    <property type="project" value="UniProtKB-UniRule"/>
</dbReference>
<dbReference type="GO" id="GO:0000049">
    <property type="term" value="F:tRNA binding"/>
    <property type="evidence" value="ECO:0007669"/>
    <property type="project" value="UniProtKB-UniRule"/>
</dbReference>
<dbReference type="GO" id="GO:0006515">
    <property type="term" value="P:protein quality control for misfolded or incompletely synthesized proteins"/>
    <property type="evidence" value="ECO:0007669"/>
    <property type="project" value="UniProtKB-UniRule"/>
</dbReference>
<dbReference type="GO" id="GO:0072344">
    <property type="term" value="P:rescue of stalled ribosome"/>
    <property type="evidence" value="ECO:0007669"/>
    <property type="project" value="UniProtKB-UniRule"/>
</dbReference>
<dbReference type="CDD" id="cd00462">
    <property type="entry name" value="PTH"/>
    <property type="match status" value="1"/>
</dbReference>
<dbReference type="FunFam" id="3.40.50.1470:FF:000001">
    <property type="entry name" value="Peptidyl-tRNA hydrolase"/>
    <property type="match status" value="1"/>
</dbReference>
<dbReference type="Gene3D" id="3.40.50.1470">
    <property type="entry name" value="Peptidyl-tRNA hydrolase"/>
    <property type="match status" value="1"/>
</dbReference>
<dbReference type="HAMAP" id="MF_00083">
    <property type="entry name" value="Pept_tRNA_hydro_bact"/>
    <property type="match status" value="1"/>
</dbReference>
<dbReference type="InterPro" id="IPR001328">
    <property type="entry name" value="Pept_tRNA_hydro"/>
</dbReference>
<dbReference type="InterPro" id="IPR018171">
    <property type="entry name" value="Pept_tRNA_hydro_CS"/>
</dbReference>
<dbReference type="InterPro" id="IPR036416">
    <property type="entry name" value="Pept_tRNA_hydro_sf"/>
</dbReference>
<dbReference type="NCBIfam" id="TIGR00447">
    <property type="entry name" value="pth"/>
    <property type="match status" value="1"/>
</dbReference>
<dbReference type="PANTHER" id="PTHR17224">
    <property type="entry name" value="PEPTIDYL-TRNA HYDROLASE"/>
    <property type="match status" value="1"/>
</dbReference>
<dbReference type="PANTHER" id="PTHR17224:SF1">
    <property type="entry name" value="PEPTIDYL-TRNA HYDROLASE"/>
    <property type="match status" value="1"/>
</dbReference>
<dbReference type="Pfam" id="PF01195">
    <property type="entry name" value="Pept_tRNA_hydro"/>
    <property type="match status" value="1"/>
</dbReference>
<dbReference type="SUPFAM" id="SSF53178">
    <property type="entry name" value="Peptidyl-tRNA hydrolase-like"/>
    <property type="match status" value="1"/>
</dbReference>
<dbReference type="PROSITE" id="PS01196">
    <property type="entry name" value="PEPT_TRNA_HYDROL_2"/>
    <property type="match status" value="1"/>
</dbReference>
<comment type="function">
    <text evidence="1">Hydrolyzes ribosome-free peptidyl-tRNAs (with 1 or more amino acids incorporated), which drop off the ribosome during protein synthesis, or as a result of ribosome stalling.</text>
</comment>
<comment type="function">
    <text evidence="1">Catalyzes the release of premature peptidyl moieties from peptidyl-tRNA molecules trapped in stalled 50S ribosomal subunits, and thus maintains levels of free tRNAs and 50S ribosomes.</text>
</comment>
<comment type="catalytic activity">
    <reaction evidence="1">
        <text>an N-acyl-L-alpha-aminoacyl-tRNA + H2O = an N-acyl-L-amino acid + a tRNA + H(+)</text>
        <dbReference type="Rhea" id="RHEA:54448"/>
        <dbReference type="Rhea" id="RHEA-COMP:10123"/>
        <dbReference type="Rhea" id="RHEA-COMP:13883"/>
        <dbReference type="ChEBI" id="CHEBI:15377"/>
        <dbReference type="ChEBI" id="CHEBI:15378"/>
        <dbReference type="ChEBI" id="CHEBI:59874"/>
        <dbReference type="ChEBI" id="CHEBI:78442"/>
        <dbReference type="ChEBI" id="CHEBI:138191"/>
        <dbReference type="EC" id="3.1.1.29"/>
    </reaction>
</comment>
<comment type="subunit">
    <text evidence="1">Monomer.</text>
</comment>
<comment type="subcellular location">
    <subcellularLocation>
        <location evidence="1">Cytoplasm</location>
    </subcellularLocation>
</comment>
<comment type="similarity">
    <text evidence="1">Belongs to the PTH family.</text>
</comment>
<name>PTH_NITMU</name>
<sequence>MKLIVGLGNPGREYAATRHNAGAWWVVRLADQLGVTLKADGKFHGLCARIGQGESESWLLNPQTYMNASGRAVAALCRFYRIQPEQMLVVHDELDLPPGVSRLKLDGGLGGHNGLKDIVAHLGTREFWRLRIGIGHPGEKHAVVNYVLQPPRKEEAALIDTAINDSLEVWPLIAEGNYQAAMMRLHTQKQS</sequence>
<evidence type="ECO:0000255" key="1">
    <source>
        <dbReference type="HAMAP-Rule" id="MF_00083"/>
    </source>
</evidence>
<protein>
    <recommendedName>
        <fullName evidence="1">Peptidyl-tRNA hydrolase</fullName>
        <shortName evidence="1">Pth</shortName>
        <ecNumber evidence="1">3.1.1.29</ecNumber>
    </recommendedName>
</protein>
<gene>
    <name evidence="1" type="primary">pth</name>
    <name type="ordered locus">Nmul_A0591</name>
</gene>
<proteinExistence type="inferred from homology"/>
<feature type="chain" id="PRO_0000264069" description="Peptidyl-tRNA hydrolase">
    <location>
        <begin position="1"/>
        <end position="191"/>
    </location>
</feature>
<feature type="active site" description="Proton acceptor" evidence="1">
    <location>
        <position position="19"/>
    </location>
</feature>
<feature type="binding site" evidence="1">
    <location>
        <position position="14"/>
    </location>
    <ligand>
        <name>tRNA</name>
        <dbReference type="ChEBI" id="CHEBI:17843"/>
    </ligand>
</feature>
<feature type="binding site" evidence="1">
    <location>
        <position position="65"/>
    </location>
    <ligand>
        <name>tRNA</name>
        <dbReference type="ChEBI" id="CHEBI:17843"/>
    </ligand>
</feature>
<feature type="binding site" evidence="1">
    <location>
        <position position="67"/>
    </location>
    <ligand>
        <name>tRNA</name>
        <dbReference type="ChEBI" id="CHEBI:17843"/>
    </ligand>
</feature>
<feature type="binding site" evidence="1">
    <location>
        <position position="113"/>
    </location>
    <ligand>
        <name>tRNA</name>
        <dbReference type="ChEBI" id="CHEBI:17843"/>
    </ligand>
</feature>
<feature type="site" description="Discriminates between blocked and unblocked aminoacyl-tRNA" evidence="1">
    <location>
        <position position="9"/>
    </location>
</feature>
<feature type="site" description="Stabilizes the basic form of H active site to accept a proton" evidence="1">
    <location>
        <position position="92"/>
    </location>
</feature>
<keyword id="KW-0963">Cytoplasm</keyword>
<keyword id="KW-0378">Hydrolase</keyword>
<keyword id="KW-1185">Reference proteome</keyword>
<keyword id="KW-0694">RNA-binding</keyword>
<keyword id="KW-0820">tRNA-binding</keyword>
<organism>
    <name type="scientific">Nitrosospira multiformis (strain ATCC 25196 / NCIMB 11849 / C 71)</name>
    <dbReference type="NCBI Taxonomy" id="323848"/>
    <lineage>
        <taxon>Bacteria</taxon>
        <taxon>Pseudomonadati</taxon>
        <taxon>Pseudomonadota</taxon>
        <taxon>Betaproteobacteria</taxon>
        <taxon>Nitrosomonadales</taxon>
        <taxon>Nitrosomonadaceae</taxon>
        <taxon>Nitrosospira</taxon>
    </lineage>
</organism>
<reference key="1">
    <citation type="submission" date="2005-08" db="EMBL/GenBank/DDBJ databases">
        <title>Complete sequence of chromosome 1 of Nitrosospira multiformis ATCC 25196.</title>
        <authorList>
            <person name="Copeland A."/>
            <person name="Lucas S."/>
            <person name="Lapidus A."/>
            <person name="Barry K."/>
            <person name="Detter J.C."/>
            <person name="Glavina T."/>
            <person name="Hammon N."/>
            <person name="Israni S."/>
            <person name="Pitluck S."/>
            <person name="Chain P."/>
            <person name="Malfatti S."/>
            <person name="Shin M."/>
            <person name="Vergez L."/>
            <person name="Schmutz J."/>
            <person name="Larimer F."/>
            <person name="Land M."/>
            <person name="Hauser L."/>
            <person name="Kyrpides N."/>
            <person name="Lykidis A."/>
            <person name="Richardson P."/>
        </authorList>
    </citation>
    <scope>NUCLEOTIDE SEQUENCE [LARGE SCALE GENOMIC DNA]</scope>
    <source>
        <strain>ATCC 25196 / NCIMB 11849 / C 71</strain>
    </source>
</reference>